<dbReference type="EMBL" id="AK037053">
    <property type="protein sequence ID" value="BAC29685.1"/>
    <property type="molecule type" value="mRNA"/>
</dbReference>
<dbReference type="EMBL" id="AK158126">
    <property type="protein sequence ID" value="BAE34372.1"/>
    <property type="molecule type" value="mRNA"/>
</dbReference>
<dbReference type="EMBL" id="AK160978">
    <property type="protein sequence ID" value="BAE36127.1"/>
    <property type="molecule type" value="mRNA"/>
</dbReference>
<dbReference type="EMBL" id="BC099946">
    <property type="protein sequence ID" value="AAH99946.1"/>
    <property type="molecule type" value="mRNA"/>
</dbReference>
<dbReference type="EMBL" id="BC117984">
    <property type="status" value="NOT_ANNOTATED_CDS"/>
    <property type="molecule type" value="mRNA"/>
</dbReference>
<dbReference type="CCDS" id="CCDS89826.1">
    <molecule id="Q499E6-1"/>
</dbReference>
<dbReference type="RefSeq" id="NP_001342532.1">
    <molecule id="Q499E6-1"/>
    <property type="nucleotide sequence ID" value="NM_001355603.1"/>
</dbReference>
<dbReference type="RefSeq" id="NP_001342534.1">
    <molecule id="Q499E6-1"/>
    <property type="nucleotide sequence ID" value="NM_001355605.1"/>
</dbReference>
<dbReference type="RefSeq" id="NP_808241.2">
    <molecule id="Q499E6-1"/>
    <property type="nucleotide sequence ID" value="NM_177573.3"/>
</dbReference>
<dbReference type="RefSeq" id="XP_006502949.1">
    <property type="nucleotide sequence ID" value="XM_006502886.3"/>
</dbReference>
<dbReference type="SMR" id="Q499E6"/>
<dbReference type="FunCoup" id="Q499E6">
    <property type="interactions" value="4014"/>
</dbReference>
<dbReference type="IntAct" id="Q499E6">
    <property type="interactions" value="1"/>
</dbReference>
<dbReference type="STRING" id="10090.ENSMUSP00000154851"/>
<dbReference type="PhosphoSitePlus" id="Q499E6"/>
<dbReference type="ProteomicsDB" id="273863">
    <molecule id="Q499E6-1"/>
</dbReference>
<dbReference type="ProteomicsDB" id="273864">
    <molecule id="Q499E6-2"/>
</dbReference>
<dbReference type="ProteomicsDB" id="273865">
    <molecule id="Q499E6-3"/>
</dbReference>
<dbReference type="Pumba" id="Q499E6"/>
<dbReference type="Antibodypedia" id="17567">
    <property type="antibodies" value="49 antibodies from 8 providers"/>
</dbReference>
<dbReference type="Ensembl" id="ENSMUST00000094769.13">
    <molecule id="Q499E6-1"/>
    <property type="protein sequence ID" value="ENSMUSP00000154851.2"/>
    <property type="gene ID" value="ENSMUSG00000044730.18"/>
</dbReference>
<dbReference type="GeneID" id="194268"/>
<dbReference type="KEGG" id="mmu:194268"/>
<dbReference type="UCSC" id="uc008url.1">
    <molecule id="Q499E6-1"/>
    <property type="organism name" value="mouse"/>
</dbReference>
<dbReference type="UCSC" id="uc008urm.1">
    <molecule id="Q499E6-3"/>
    <property type="organism name" value="mouse"/>
</dbReference>
<dbReference type="AGR" id="MGI:3041172"/>
<dbReference type="CTD" id="54955"/>
<dbReference type="MGI" id="MGI:3041172">
    <property type="gene designation" value="Airim"/>
</dbReference>
<dbReference type="VEuPathDB" id="HostDB:ENSMUSG00000044730"/>
<dbReference type="GeneTree" id="ENSGT00390000008551"/>
<dbReference type="InParanoid" id="Q499E6"/>
<dbReference type="OMA" id="SHVEQVF"/>
<dbReference type="OrthoDB" id="6605214at2759"/>
<dbReference type="PhylomeDB" id="Q499E6"/>
<dbReference type="BioGRID-ORCS" id="194268">
    <property type="hits" value="4 hits in 17 CRISPR screens"/>
</dbReference>
<dbReference type="PRO" id="PR:Q499E6"/>
<dbReference type="Proteomes" id="UP000000589">
    <property type="component" value="Chromosome 4"/>
</dbReference>
<dbReference type="RNAct" id="Q499E6">
    <property type="molecule type" value="protein"/>
</dbReference>
<dbReference type="Bgee" id="ENSMUSG00000044730">
    <property type="expression patterns" value="Expressed in retinal neural layer and 214 other cell types or tissues"/>
</dbReference>
<dbReference type="GO" id="GO:0005737">
    <property type="term" value="C:cytoplasm"/>
    <property type="evidence" value="ECO:0000250"/>
    <property type="project" value="UniProtKB"/>
</dbReference>
<dbReference type="GO" id="GO:0005829">
    <property type="term" value="C:cytosol"/>
    <property type="evidence" value="ECO:0007669"/>
    <property type="project" value="Ensembl"/>
</dbReference>
<dbReference type="GO" id="GO:0005730">
    <property type="term" value="C:nucleolus"/>
    <property type="evidence" value="ECO:0007669"/>
    <property type="project" value="Ensembl"/>
</dbReference>
<dbReference type="GO" id="GO:0005654">
    <property type="term" value="C:nucleoplasm"/>
    <property type="evidence" value="ECO:0007669"/>
    <property type="project" value="Ensembl"/>
</dbReference>
<dbReference type="GO" id="GO:0005634">
    <property type="term" value="C:nucleus"/>
    <property type="evidence" value="ECO:0000250"/>
    <property type="project" value="UniProtKB"/>
</dbReference>
<dbReference type="GO" id="GO:0042273">
    <property type="term" value="P:ribosomal large subunit biogenesis"/>
    <property type="evidence" value="ECO:0000250"/>
    <property type="project" value="UniProtKB"/>
</dbReference>
<dbReference type="InterPro" id="IPR029159">
    <property type="entry name" value="CA109-like"/>
</dbReference>
<dbReference type="PANTHER" id="PTHR16234:SF5">
    <property type="entry name" value="AFG2-INTERACTING RIBOSOME MATURATION FACTOR"/>
    <property type="match status" value="1"/>
</dbReference>
<dbReference type="PANTHER" id="PTHR16234">
    <property type="entry name" value="SIMILAR TO HYPOTHETICAL PROTEIN FLJ20508"/>
    <property type="match status" value="1"/>
</dbReference>
<dbReference type="Pfam" id="PF15011">
    <property type="entry name" value="CA109-like"/>
    <property type="match status" value="1"/>
</dbReference>
<accession>Q499E6</accession>
<accession>Q148T1</accession>
<accession>Q3TU44</accession>
<accession>Q8BI05</accession>
<feature type="chain" id="PRO_0000274383" description="AFG2-interacting ribosome maturation factor">
    <location>
        <begin position="1"/>
        <end position="217"/>
    </location>
</feature>
<feature type="splice variant" id="VSP_022735" description="In isoform 3." evidence="2 3">
    <location>
        <begin position="93"/>
        <end position="217"/>
    </location>
</feature>
<feature type="splice variant" id="VSP_022736" description="In isoform 2." evidence="3">
    <original>SSYLKRKYLLSSIHWGDLASIQALPKAWDQISENECQTLVSDVLVSVSFFLEEPGGCAASGDLEHHS</original>
    <variation>GSYPSSAS</variation>
    <location>
        <begin position="151"/>
        <end position="217"/>
    </location>
</feature>
<feature type="sequence conflict" description="In Ref. 2; BC117984." evidence="4" ref="2">
    <original>A</original>
    <variation>S</variation>
    <location>
        <position position="62"/>
    </location>
</feature>
<proteinExistence type="evidence at transcript level"/>
<gene>
    <name type="primary">Airim</name>
</gene>
<protein>
    <recommendedName>
        <fullName evidence="1">AFG2-interacting ribosome maturation factor</fullName>
    </recommendedName>
    <alternativeName>
        <fullName evidence="4">Ribosome biogenesis protein C1orf109 homolog</fullName>
    </alternativeName>
</protein>
<name>AIRIM_MOUSE</name>
<comment type="function">
    <text evidence="1">Part of the 55LCC heterohexameric ATPase complex which is chromatin-associated and promotes replisome proteostasis to maintain replication fork progression and genome stability. Required for replication fork progression, sister chromatid cohesion, and chromosome stability. The ATPase activity is specifically enhanced by replication fork DNA and is coupled to cysteine protease-dependent cleavage of replisome substrates in response to replication fork damage. Uses ATPase activity to process replisome substrates in S-phase, facilitating their proteolytic turnover from chromatin to ensure DNA replication and mitotic fidelity. Involved in the cytoplasmic maturation steps of pre-60S ribosomal particles by promoting the release of shuttling protein RSL24D1/RLP24 from the pre-ribosomal particles.</text>
</comment>
<comment type="subunit">
    <text evidence="1">Part of the 55LCC heterohexameric ATPase complex composed at least of AIRIM, AFG2A, AFG2B and CINP. Does not associate with pre-60S ribosomal particles.</text>
</comment>
<comment type="subcellular location">
    <subcellularLocation>
        <location evidence="1">Nucleus</location>
    </subcellularLocation>
    <subcellularLocation>
        <location evidence="1">Cytoplasm</location>
    </subcellularLocation>
</comment>
<comment type="alternative products">
    <event type="alternative splicing"/>
    <isoform>
        <id>Q499E6-1</id>
        <name>1</name>
        <sequence type="displayed"/>
    </isoform>
    <isoform>
        <id>Q499E6-2</id>
        <name>2</name>
        <sequence type="described" ref="VSP_022736"/>
    </isoform>
    <isoform>
        <id>Q499E6-3</id>
        <name>3</name>
        <sequence type="described" ref="VSP_022735"/>
    </isoform>
</comment>
<comment type="PTM">
    <text evidence="1">Phosphorylated on serines by CK2 kinase.</text>
</comment>
<reference key="1">
    <citation type="journal article" date="2005" name="Science">
        <title>The transcriptional landscape of the mammalian genome.</title>
        <authorList>
            <person name="Carninci P."/>
            <person name="Kasukawa T."/>
            <person name="Katayama S."/>
            <person name="Gough J."/>
            <person name="Frith M.C."/>
            <person name="Maeda N."/>
            <person name="Oyama R."/>
            <person name="Ravasi T."/>
            <person name="Lenhard B."/>
            <person name="Wells C."/>
            <person name="Kodzius R."/>
            <person name="Shimokawa K."/>
            <person name="Bajic V.B."/>
            <person name="Brenner S.E."/>
            <person name="Batalov S."/>
            <person name="Forrest A.R."/>
            <person name="Zavolan M."/>
            <person name="Davis M.J."/>
            <person name="Wilming L.G."/>
            <person name="Aidinis V."/>
            <person name="Allen J.E."/>
            <person name="Ambesi-Impiombato A."/>
            <person name="Apweiler R."/>
            <person name="Aturaliya R.N."/>
            <person name="Bailey T.L."/>
            <person name="Bansal M."/>
            <person name="Baxter L."/>
            <person name="Beisel K.W."/>
            <person name="Bersano T."/>
            <person name="Bono H."/>
            <person name="Chalk A.M."/>
            <person name="Chiu K.P."/>
            <person name="Choudhary V."/>
            <person name="Christoffels A."/>
            <person name="Clutterbuck D.R."/>
            <person name="Crowe M.L."/>
            <person name="Dalla E."/>
            <person name="Dalrymple B.P."/>
            <person name="de Bono B."/>
            <person name="Della Gatta G."/>
            <person name="di Bernardo D."/>
            <person name="Down T."/>
            <person name="Engstrom P."/>
            <person name="Fagiolini M."/>
            <person name="Faulkner G."/>
            <person name="Fletcher C.F."/>
            <person name="Fukushima T."/>
            <person name="Furuno M."/>
            <person name="Futaki S."/>
            <person name="Gariboldi M."/>
            <person name="Georgii-Hemming P."/>
            <person name="Gingeras T.R."/>
            <person name="Gojobori T."/>
            <person name="Green R.E."/>
            <person name="Gustincich S."/>
            <person name="Harbers M."/>
            <person name="Hayashi Y."/>
            <person name="Hensch T.K."/>
            <person name="Hirokawa N."/>
            <person name="Hill D."/>
            <person name="Huminiecki L."/>
            <person name="Iacono M."/>
            <person name="Ikeo K."/>
            <person name="Iwama A."/>
            <person name="Ishikawa T."/>
            <person name="Jakt M."/>
            <person name="Kanapin A."/>
            <person name="Katoh M."/>
            <person name="Kawasawa Y."/>
            <person name="Kelso J."/>
            <person name="Kitamura H."/>
            <person name="Kitano H."/>
            <person name="Kollias G."/>
            <person name="Krishnan S.P."/>
            <person name="Kruger A."/>
            <person name="Kummerfeld S.K."/>
            <person name="Kurochkin I.V."/>
            <person name="Lareau L.F."/>
            <person name="Lazarevic D."/>
            <person name="Lipovich L."/>
            <person name="Liu J."/>
            <person name="Liuni S."/>
            <person name="McWilliam S."/>
            <person name="Madan Babu M."/>
            <person name="Madera M."/>
            <person name="Marchionni L."/>
            <person name="Matsuda H."/>
            <person name="Matsuzawa S."/>
            <person name="Miki H."/>
            <person name="Mignone F."/>
            <person name="Miyake S."/>
            <person name="Morris K."/>
            <person name="Mottagui-Tabar S."/>
            <person name="Mulder N."/>
            <person name="Nakano N."/>
            <person name="Nakauchi H."/>
            <person name="Ng P."/>
            <person name="Nilsson R."/>
            <person name="Nishiguchi S."/>
            <person name="Nishikawa S."/>
            <person name="Nori F."/>
            <person name="Ohara O."/>
            <person name="Okazaki Y."/>
            <person name="Orlando V."/>
            <person name="Pang K.C."/>
            <person name="Pavan W.J."/>
            <person name="Pavesi G."/>
            <person name="Pesole G."/>
            <person name="Petrovsky N."/>
            <person name="Piazza S."/>
            <person name="Reed J."/>
            <person name="Reid J.F."/>
            <person name="Ring B.Z."/>
            <person name="Ringwald M."/>
            <person name="Rost B."/>
            <person name="Ruan Y."/>
            <person name="Salzberg S.L."/>
            <person name="Sandelin A."/>
            <person name="Schneider C."/>
            <person name="Schoenbach C."/>
            <person name="Sekiguchi K."/>
            <person name="Semple C.A."/>
            <person name="Seno S."/>
            <person name="Sessa L."/>
            <person name="Sheng Y."/>
            <person name="Shibata Y."/>
            <person name="Shimada H."/>
            <person name="Shimada K."/>
            <person name="Silva D."/>
            <person name="Sinclair B."/>
            <person name="Sperling S."/>
            <person name="Stupka E."/>
            <person name="Sugiura K."/>
            <person name="Sultana R."/>
            <person name="Takenaka Y."/>
            <person name="Taki K."/>
            <person name="Tammoja K."/>
            <person name="Tan S.L."/>
            <person name="Tang S."/>
            <person name="Taylor M.S."/>
            <person name="Tegner J."/>
            <person name="Teichmann S.A."/>
            <person name="Ueda H.R."/>
            <person name="van Nimwegen E."/>
            <person name="Verardo R."/>
            <person name="Wei C.L."/>
            <person name="Yagi K."/>
            <person name="Yamanishi H."/>
            <person name="Zabarovsky E."/>
            <person name="Zhu S."/>
            <person name="Zimmer A."/>
            <person name="Hide W."/>
            <person name="Bult C."/>
            <person name="Grimmond S.M."/>
            <person name="Teasdale R.D."/>
            <person name="Liu E.T."/>
            <person name="Brusic V."/>
            <person name="Quackenbush J."/>
            <person name="Wahlestedt C."/>
            <person name="Mattick J.S."/>
            <person name="Hume D.A."/>
            <person name="Kai C."/>
            <person name="Sasaki D."/>
            <person name="Tomaru Y."/>
            <person name="Fukuda S."/>
            <person name="Kanamori-Katayama M."/>
            <person name="Suzuki M."/>
            <person name="Aoki J."/>
            <person name="Arakawa T."/>
            <person name="Iida J."/>
            <person name="Imamura K."/>
            <person name="Itoh M."/>
            <person name="Kato T."/>
            <person name="Kawaji H."/>
            <person name="Kawagashira N."/>
            <person name="Kawashima T."/>
            <person name="Kojima M."/>
            <person name="Kondo S."/>
            <person name="Konno H."/>
            <person name="Nakano K."/>
            <person name="Ninomiya N."/>
            <person name="Nishio T."/>
            <person name="Okada M."/>
            <person name="Plessy C."/>
            <person name="Shibata K."/>
            <person name="Shiraki T."/>
            <person name="Suzuki S."/>
            <person name="Tagami M."/>
            <person name="Waki K."/>
            <person name="Watahiki A."/>
            <person name="Okamura-Oho Y."/>
            <person name="Suzuki H."/>
            <person name="Kawai J."/>
            <person name="Hayashizaki Y."/>
        </authorList>
    </citation>
    <scope>NUCLEOTIDE SEQUENCE [LARGE SCALE MRNA] (ISOFORMS 1; 2 AND 3)</scope>
    <source>
        <strain>C57BL/6J</strain>
        <tissue>Inner ear</tissue>
    </source>
</reference>
<reference key="2">
    <citation type="journal article" date="2004" name="Genome Res.">
        <title>The status, quality, and expansion of the NIH full-length cDNA project: the Mammalian Gene Collection (MGC).</title>
        <authorList>
            <consortium name="The MGC Project Team"/>
        </authorList>
    </citation>
    <scope>NUCLEOTIDE SEQUENCE [LARGE SCALE MRNA] (ISOFORMS 1 AND 3)</scope>
    <source>
        <strain>CD-1</strain>
        <tissue>Neural stem cell</tissue>
    </source>
</reference>
<keyword id="KW-0025">Alternative splicing</keyword>
<keyword id="KW-0963">Cytoplasm</keyword>
<keyword id="KW-0539">Nucleus</keyword>
<keyword id="KW-0597">Phosphoprotein</keyword>
<keyword id="KW-1185">Reference proteome</keyword>
<keyword id="KW-0690">Ribosome biogenesis</keyword>
<organism>
    <name type="scientific">Mus musculus</name>
    <name type="common">Mouse</name>
    <dbReference type="NCBI Taxonomy" id="10090"/>
    <lineage>
        <taxon>Eukaryota</taxon>
        <taxon>Metazoa</taxon>
        <taxon>Chordata</taxon>
        <taxon>Craniata</taxon>
        <taxon>Vertebrata</taxon>
        <taxon>Euteleostomi</taxon>
        <taxon>Mammalia</taxon>
        <taxon>Eutheria</taxon>
        <taxon>Euarchontoglires</taxon>
        <taxon>Glires</taxon>
        <taxon>Rodentia</taxon>
        <taxon>Myomorpha</taxon>
        <taxon>Muroidea</taxon>
        <taxon>Muridae</taxon>
        <taxon>Murinae</taxon>
        <taxon>Mus</taxon>
        <taxon>Mus</taxon>
    </lineage>
</organism>
<sequence length="217" mass="24442">MAHDQPLLVVQEALRKCFPVVEEQQNLWQSTLQDCSPLLSSLSNLAEQLQAAQSLRFEDVPALRPFPDLQERLRRKQLEAGDVVLDKLAERLATLLKVRNTINSHVEQVFQAYEQHAAVLDIDTVLRPSVVSPSVADMLEWLQDIDRHYGSSYLKRKYLLSSIHWGDLASIQALPKAWDQISENECQTLVSDVLVSVSFFLEEPGGCAASGDLEHHS</sequence>
<evidence type="ECO:0000250" key="1">
    <source>
        <dbReference type="UniProtKB" id="Q9NX04"/>
    </source>
</evidence>
<evidence type="ECO:0000303" key="2">
    <source>
    </source>
</evidence>
<evidence type="ECO:0000303" key="3">
    <source>
    </source>
</evidence>
<evidence type="ECO:0000305" key="4"/>